<evidence type="ECO:0000255" key="1">
    <source>
        <dbReference type="HAMAP-Rule" id="MF_00015"/>
    </source>
</evidence>
<dbReference type="EC" id="3.4.21.88" evidence="1"/>
<dbReference type="EMBL" id="AL513382">
    <property type="protein sequence ID" value="CAD09221.1"/>
    <property type="molecule type" value="Genomic_DNA"/>
</dbReference>
<dbReference type="EMBL" id="AE014613">
    <property type="protein sequence ID" value="AAO71607.1"/>
    <property type="molecule type" value="Genomic_DNA"/>
</dbReference>
<dbReference type="RefSeq" id="NP_458535.1">
    <property type="nucleotide sequence ID" value="NC_003198.1"/>
</dbReference>
<dbReference type="RefSeq" id="WP_000646079.1">
    <property type="nucleotide sequence ID" value="NZ_WSUR01000027.1"/>
</dbReference>
<dbReference type="SMR" id="P0A274"/>
<dbReference type="STRING" id="220341.gene:17588265"/>
<dbReference type="MEROPS" id="S24.001"/>
<dbReference type="KEGG" id="stt:t4143"/>
<dbReference type="KEGG" id="sty:STY4433"/>
<dbReference type="PATRIC" id="fig|220341.7.peg.4533"/>
<dbReference type="eggNOG" id="COG1974">
    <property type="taxonomic scope" value="Bacteria"/>
</dbReference>
<dbReference type="HOGENOM" id="CLU_066192_45_3_6"/>
<dbReference type="OMA" id="HVWLLPH"/>
<dbReference type="OrthoDB" id="9802364at2"/>
<dbReference type="Proteomes" id="UP000000541">
    <property type="component" value="Chromosome"/>
</dbReference>
<dbReference type="Proteomes" id="UP000002670">
    <property type="component" value="Chromosome"/>
</dbReference>
<dbReference type="GO" id="GO:0003677">
    <property type="term" value="F:DNA binding"/>
    <property type="evidence" value="ECO:0007669"/>
    <property type="project" value="UniProtKB-UniRule"/>
</dbReference>
<dbReference type="GO" id="GO:0004252">
    <property type="term" value="F:serine-type endopeptidase activity"/>
    <property type="evidence" value="ECO:0007669"/>
    <property type="project" value="UniProtKB-UniRule"/>
</dbReference>
<dbReference type="GO" id="GO:0006281">
    <property type="term" value="P:DNA repair"/>
    <property type="evidence" value="ECO:0007669"/>
    <property type="project" value="UniProtKB-UniRule"/>
</dbReference>
<dbReference type="GO" id="GO:0006260">
    <property type="term" value="P:DNA replication"/>
    <property type="evidence" value="ECO:0007669"/>
    <property type="project" value="UniProtKB-UniRule"/>
</dbReference>
<dbReference type="GO" id="GO:0045892">
    <property type="term" value="P:negative regulation of DNA-templated transcription"/>
    <property type="evidence" value="ECO:0007669"/>
    <property type="project" value="UniProtKB-UniRule"/>
</dbReference>
<dbReference type="GO" id="GO:0006508">
    <property type="term" value="P:proteolysis"/>
    <property type="evidence" value="ECO:0007669"/>
    <property type="project" value="InterPro"/>
</dbReference>
<dbReference type="GO" id="GO:0009432">
    <property type="term" value="P:SOS response"/>
    <property type="evidence" value="ECO:0007669"/>
    <property type="project" value="UniProtKB-UniRule"/>
</dbReference>
<dbReference type="CDD" id="cd06529">
    <property type="entry name" value="S24_LexA-like"/>
    <property type="match status" value="1"/>
</dbReference>
<dbReference type="FunFam" id="1.10.10.10:FF:000009">
    <property type="entry name" value="LexA repressor"/>
    <property type="match status" value="1"/>
</dbReference>
<dbReference type="FunFam" id="2.10.109.10:FF:000001">
    <property type="entry name" value="LexA repressor"/>
    <property type="match status" value="1"/>
</dbReference>
<dbReference type="Gene3D" id="2.10.109.10">
    <property type="entry name" value="Umud Fragment, subunit A"/>
    <property type="match status" value="1"/>
</dbReference>
<dbReference type="Gene3D" id="1.10.10.10">
    <property type="entry name" value="Winged helix-like DNA-binding domain superfamily/Winged helix DNA-binding domain"/>
    <property type="match status" value="1"/>
</dbReference>
<dbReference type="HAMAP" id="MF_00015">
    <property type="entry name" value="LexA"/>
    <property type="match status" value="1"/>
</dbReference>
<dbReference type="InterPro" id="IPR006200">
    <property type="entry name" value="LexA"/>
</dbReference>
<dbReference type="InterPro" id="IPR039418">
    <property type="entry name" value="LexA-like"/>
</dbReference>
<dbReference type="InterPro" id="IPR036286">
    <property type="entry name" value="LexA/Signal_pep-like_sf"/>
</dbReference>
<dbReference type="InterPro" id="IPR006199">
    <property type="entry name" value="LexA_DNA-bd_dom"/>
</dbReference>
<dbReference type="InterPro" id="IPR050077">
    <property type="entry name" value="LexA_repressor"/>
</dbReference>
<dbReference type="InterPro" id="IPR006197">
    <property type="entry name" value="Peptidase_S24_LexA"/>
</dbReference>
<dbReference type="InterPro" id="IPR015927">
    <property type="entry name" value="Peptidase_S24_S26A/B/C"/>
</dbReference>
<dbReference type="InterPro" id="IPR036388">
    <property type="entry name" value="WH-like_DNA-bd_sf"/>
</dbReference>
<dbReference type="InterPro" id="IPR036390">
    <property type="entry name" value="WH_DNA-bd_sf"/>
</dbReference>
<dbReference type="NCBIfam" id="TIGR00498">
    <property type="entry name" value="lexA"/>
    <property type="match status" value="1"/>
</dbReference>
<dbReference type="PANTHER" id="PTHR33516">
    <property type="entry name" value="LEXA REPRESSOR"/>
    <property type="match status" value="1"/>
</dbReference>
<dbReference type="PANTHER" id="PTHR33516:SF2">
    <property type="entry name" value="LEXA REPRESSOR-RELATED"/>
    <property type="match status" value="1"/>
</dbReference>
<dbReference type="Pfam" id="PF01726">
    <property type="entry name" value="LexA_DNA_bind"/>
    <property type="match status" value="1"/>
</dbReference>
<dbReference type="Pfam" id="PF00717">
    <property type="entry name" value="Peptidase_S24"/>
    <property type="match status" value="1"/>
</dbReference>
<dbReference type="PRINTS" id="PR00726">
    <property type="entry name" value="LEXASERPTASE"/>
</dbReference>
<dbReference type="SUPFAM" id="SSF51306">
    <property type="entry name" value="LexA/Signal peptidase"/>
    <property type="match status" value="1"/>
</dbReference>
<dbReference type="SUPFAM" id="SSF46785">
    <property type="entry name" value="Winged helix' DNA-binding domain"/>
    <property type="match status" value="1"/>
</dbReference>
<proteinExistence type="inferred from homology"/>
<feature type="chain" id="PRO_0000170082" description="LexA repressor">
    <location>
        <begin position="1"/>
        <end position="202"/>
    </location>
</feature>
<feature type="DNA-binding region" description="H-T-H motif" evidence="1">
    <location>
        <begin position="28"/>
        <end position="48"/>
    </location>
</feature>
<feature type="active site" description="For autocatalytic cleavage activity" evidence="1">
    <location>
        <position position="119"/>
    </location>
</feature>
<feature type="active site" description="For autocatalytic cleavage activity" evidence="1">
    <location>
        <position position="156"/>
    </location>
</feature>
<feature type="site" description="Cleavage; by autolysis" evidence="1">
    <location>
        <begin position="84"/>
        <end position="85"/>
    </location>
</feature>
<sequence>MKALTARQQEVFDLIRDHISQTGMPPTRAEIAQRLGFRSPNAAEEHLKALARKGVLEIVSGASRGIRLLQEEEDGLPLVGRVAAGEPLLAQQHIEGHYQVDPSLFKPSADFLLRVSGMSMKDIGIMDGDLLAVHKTQDVRNGQVVVARIDDEVTVKRLKKQGNKVELLPENSEFTPIVVDLREQSFTIEGLAVGVIRNGEWL</sequence>
<keyword id="KW-0068">Autocatalytic cleavage</keyword>
<keyword id="KW-0227">DNA damage</keyword>
<keyword id="KW-0234">DNA repair</keyword>
<keyword id="KW-0235">DNA replication</keyword>
<keyword id="KW-0238">DNA-binding</keyword>
<keyword id="KW-0378">Hydrolase</keyword>
<keyword id="KW-0678">Repressor</keyword>
<keyword id="KW-0742">SOS response</keyword>
<keyword id="KW-0804">Transcription</keyword>
<keyword id="KW-0805">Transcription regulation</keyword>
<reference key="1">
    <citation type="journal article" date="2001" name="Nature">
        <title>Complete genome sequence of a multiple drug resistant Salmonella enterica serovar Typhi CT18.</title>
        <authorList>
            <person name="Parkhill J."/>
            <person name="Dougan G."/>
            <person name="James K.D."/>
            <person name="Thomson N.R."/>
            <person name="Pickard D."/>
            <person name="Wain J."/>
            <person name="Churcher C.M."/>
            <person name="Mungall K.L."/>
            <person name="Bentley S.D."/>
            <person name="Holden M.T.G."/>
            <person name="Sebaihia M."/>
            <person name="Baker S."/>
            <person name="Basham D."/>
            <person name="Brooks K."/>
            <person name="Chillingworth T."/>
            <person name="Connerton P."/>
            <person name="Cronin A."/>
            <person name="Davis P."/>
            <person name="Davies R.M."/>
            <person name="Dowd L."/>
            <person name="White N."/>
            <person name="Farrar J."/>
            <person name="Feltwell T."/>
            <person name="Hamlin N."/>
            <person name="Haque A."/>
            <person name="Hien T.T."/>
            <person name="Holroyd S."/>
            <person name="Jagels K."/>
            <person name="Krogh A."/>
            <person name="Larsen T.S."/>
            <person name="Leather S."/>
            <person name="Moule S."/>
            <person name="O'Gaora P."/>
            <person name="Parry C."/>
            <person name="Quail M.A."/>
            <person name="Rutherford K.M."/>
            <person name="Simmonds M."/>
            <person name="Skelton J."/>
            <person name="Stevens K."/>
            <person name="Whitehead S."/>
            <person name="Barrell B.G."/>
        </authorList>
    </citation>
    <scope>NUCLEOTIDE SEQUENCE [LARGE SCALE GENOMIC DNA]</scope>
    <source>
        <strain>CT18</strain>
    </source>
</reference>
<reference key="2">
    <citation type="journal article" date="2003" name="J. Bacteriol.">
        <title>Comparative genomics of Salmonella enterica serovar Typhi strains Ty2 and CT18.</title>
        <authorList>
            <person name="Deng W."/>
            <person name="Liou S.-R."/>
            <person name="Plunkett G. III"/>
            <person name="Mayhew G.F."/>
            <person name="Rose D.J."/>
            <person name="Burland V."/>
            <person name="Kodoyianni V."/>
            <person name="Schwartz D.C."/>
            <person name="Blattner F.R."/>
        </authorList>
    </citation>
    <scope>NUCLEOTIDE SEQUENCE [LARGE SCALE GENOMIC DNA]</scope>
    <source>
        <strain>ATCC 700931 / Ty2</strain>
    </source>
</reference>
<gene>
    <name evidence="1" type="primary">lexA</name>
    <name type="ordered locus">STY4433</name>
    <name type="ordered locus">t4143</name>
</gene>
<accession>P0A274</accession>
<accession>P29831</accession>
<organism>
    <name type="scientific">Salmonella typhi</name>
    <dbReference type="NCBI Taxonomy" id="90370"/>
    <lineage>
        <taxon>Bacteria</taxon>
        <taxon>Pseudomonadati</taxon>
        <taxon>Pseudomonadota</taxon>
        <taxon>Gammaproteobacteria</taxon>
        <taxon>Enterobacterales</taxon>
        <taxon>Enterobacteriaceae</taxon>
        <taxon>Salmonella</taxon>
    </lineage>
</organism>
<comment type="function">
    <text evidence="1">Represses a number of genes involved in the response to DNA damage (SOS response), including recA and lexA. Binds to the 16 bp palindromic sequence 5'-CTGTATATATATACAG-3'. In the presence of single-stranded DNA, RecA interacts with LexA causing an autocatalytic cleavage which disrupts the DNA-binding part of LexA, leading to derepression of the SOS regulon and eventually DNA repair.</text>
</comment>
<comment type="catalytic activity">
    <reaction evidence="1">
        <text>Hydrolysis of Ala-|-Gly bond in repressor LexA.</text>
        <dbReference type="EC" id="3.4.21.88"/>
    </reaction>
</comment>
<comment type="subunit">
    <text evidence="1">Homodimer.</text>
</comment>
<comment type="similarity">
    <text evidence="1">Belongs to the peptidase S24 family.</text>
</comment>
<protein>
    <recommendedName>
        <fullName evidence="1">LexA repressor</fullName>
        <ecNumber evidence="1">3.4.21.88</ecNumber>
    </recommendedName>
</protein>
<name>LEXA_SALTI</name>